<organism>
    <name type="scientific">Bos taurus</name>
    <name type="common">Bovine</name>
    <dbReference type="NCBI Taxonomy" id="9913"/>
    <lineage>
        <taxon>Eukaryota</taxon>
        <taxon>Metazoa</taxon>
        <taxon>Chordata</taxon>
        <taxon>Craniata</taxon>
        <taxon>Vertebrata</taxon>
        <taxon>Euteleostomi</taxon>
        <taxon>Mammalia</taxon>
        <taxon>Eutheria</taxon>
        <taxon>Laurasiatheria</taxon>
        <taxon>Artiodactyla</taxon>
        <taxon>Ruminantia</taxon>
        <taxon>Pecora</taxon>
        <taxon>Bovidae</taxon>
        <taxon>Bovinae</taxon>
        <taxon>Bos</taxon>
    </lineage>
</organism>
<reference key="1">
    <citation type="submission" date="2005-08" db="EMBL/GenBank/DDBJ databases">
        <authorList>
            <consortium name="NIH - Mammalian Gene Collection (MGC) project"/>
        </authorList>
    </citation>
    <scope>NUCLEOTIDE SEQUENCE [LARGE SCALE MRNA]</scope>
    <source>
        <strain>Crossbred X Angus</strain>
        <tissue>Liver</tissue>
    </source>
</reference>
<protein>
    <recommendedName>
        <fullName>Calmegin</fullName>
    </recommendedName>
</protein>
<accession>Q3SYT6</accession>
<evidence type="ECO:0000250" key="1"/>
<evidence type="ECO:0000250" key="2">
    <source>
        <dbReference type="UniProtKB" id="O14967"/>
    </source>
</evidence>
<evidence type="ECO:0000250" key="3">
    <source>
        <dbReference type="UniProtKB" id="P27824"/>
    </source>
</evidence>
<evidence type="ECO:0000250" key="4">
    <source>
        <dbReference type="UniProtKB" id="P52194"/>
    </source>
</evidence>
<evidence type="ECO:0000255" key="5"/>
<evidence type="ECO:0000256" key="6">
    <source>
        <dbReference type="SAM" id="MobiDB-lite"/>
    </source>
</evidence>
<evidence type="ECO:0000305" key="7"/>
<comment type="function">
    <text evidence="1">Functions during spermatogenesis as a chaperone for a range of client proteins that are important for sperm adhesion onto the egg zona pellucida and for subsequent penetration of the zona pellucida. Required for normal sperm migration from the uterus into the oviduct. Required for normal male fertility. Binds calcium ions (By similarity).</text>
</comment>
<comment type="subunit">
    <text evidence="1">Interacts with PPIB and PDILT. Interacts with ADAM2 (By similarity).</text>
</comment>
<comment type="subcellular location">
    <subcellularLocation>
        <location evidence="1">Endoplasmic reticulum membrane</location>
        <topology evidence="1">Single-pass type I membrane protein</topology>
    </subcellularLocation>
</comment>
<comment type="similarity">
    <text evidence="7">Belongs to the calreticulin family.</text>
</comment>
<proteinExistence type="evidence at transcript level"/>
<gene>
    <name type="primary">CLGN</name>
</gene>
<sequence length="606" mass="69515">MRFQGFWLCLGLLFISVNAEFMDDSVEMEDFDENSEETDELSSEIKYKTPQPVGEVYFTETFDSGRLAGWVLSKAKKDDIDAEISIYDGRWEIEELKENRIPGDRGLVLKSRAKHHAISAVLAKPFIFADKPLVVQYEVNFQDGIDCGGAYIKLLADTDGLNLENFYDKTSYTIMFGPDKCGEDYKLHFIFRHKHPKTGVFEEKHAKPPDVDLKRFFTDRKTHLYTLVMNPDDTFEVLIDQIVVNKGSLLEDVVPPINPPKEIEDPTDEKPDDWDERAKIPDASAVKPEDWDESEPPQIVDSSAVKPDGWLDNEPEFIPDPNAEKPFDWNEDMDGEWEAPHISNPACRIGCGEWSPPMIDNPKYKGIWRPPMIDNPNYQGIWSPRKIPNPDYFEDNHPFLLTSFRALGLELWSMTSDIYFDNFIICSEKEVADRWAADGWGMKILIENANEPSIFKQLMSATEQRPWLWFIYLLTAALPIALIGSFCWPRKVKKKYEDVAFEKLDICKPQTKGALEQEVKEEKAALEKPVDLEEEKKQSDGEIVEKEEEGEPEEKSEEEIEIIEGQEEGNKSNKSGSEDEMKEADESTGSGDGPIKSVRKRRVRKE</sequence>
<dbReference type="EMBL" id="BC103401">
    <property type="protein sequence ID" value="AAI03402.1"/>
    <property type="molecule type" value="mRNA"/>
</dbReference>
<dbReference type="RefSeq" id="NP_001029377.1">
    <property type="nucleotide sequence ID" value="NM_001034205.2"/>
</dbReference>
<dbReference type="RefSeq" id="XP_024832807.1">
    <property type="nucleotide sequence ID" value="XM_024977039.2"/>
</dbReference>
<dbReference type="RefSeq" id="XP_024832808.1">
    <property type="nucleotide sequence ID" value="XM_024977040.2"/>
</dbReference>
<dbReference type="SMR" id="Q3SYT6"/>
<dbReference type="FunCoup" id="Q3SYT6">
    <property type="interactions" value="458"/>
</dbReference>
<dbReference type="STRING" id="9913.ENSBTAP00000002071"/>
<dbReference type="SwissPalm" id="Q3SYT6"/>
<dbReference type="PaxDb" id="9913-ENSBTAP00000002071"/>
<dbReference type="Ensembl" id="ENSBTAT00000002071.5">
    <property type="protein sequence ID" value="ENSBTAP00000002071.4"/>
    <property type="gene ID" value="ENSBTAG00000001580.6"/>
</dbReference>
<dbReference type="GeneID" id="504256"/>
<dbReference type="KEGG" id="bta:504256"/>
<dbReference type="CTD" id="1047"/>
<dbReference type="VEuPathDB" id="HostDB:ENSBTAG00000001580"/>
<dbReference type="VGNC" id="VGNC:27437">
    <property type="gene designation" value="CLGN"/>
</dbReference>
<dbReference type="eggNOG" id="KOG0675">
    <property type="taxonomic scope" value="Eukaryota"/>
</dbReference>
<dbReference type="GeneTree" id="ENSGT00950000182915"/>
<dbReference type="HOGENOM" id="CLU_018224_2_0_1"/>
<dbReference type="InParanoid" id="Q3SYT6"/>
<dbReference type="OMA" id="KHAKPPN"/>
<dbReference type="OrthoDB" id="1938156at2759"/>
<dbReference type="TreeFam" id="TF300618"/>
<dbReference type="Proteomes" id="UP000009136">
    <property type="component" value="Chromosome 17"/>
</dbReference>
<dbReference type="Bgee" id="ENSBTAG00000001580">
    <property type="expression patterns" value="Expressed in spermatid and 99 other cell types or tissues"/>
</dbReference>
<dbReference type="GO" id="GO:0005789">
    <property type="term" value="C:endoplasmic reticulum membrane"/>
    <property type="evidence" value="ECO:0000318"/>
    <property type="project" value="GO_Central"/>
</dbReference>
<dbReference type="GO" id="GO:0005635">
    <property type="term" value="C:nuclear envelope"/>
    <property type="evidence" value="ECO:0007669"/>
    <property type="project" value="Ensembl"/>
</dbReference>
<dbReference type="GO" id="GO:0005509">
    <property type="term" value="F:calcium ion binding"/>
    <property type="evidence" value="ECO:0000318"/>
    <property type="project" value="GO_Central"/>
</dbReference>
<dbReference type="GO" id="GO:0044183">
    <property type="term" value="F:protein folding chaperone"/>
    <property type="evidence" value="ECO:0007669"/>
    <property type="project" value="Ensembl"/>
</dbReference>
<dbReference type="GO" id="GO:0051082">
    <property type="term" value="F:unfolded protein binding"/>
    <property type="evidence" value="ECO:0007669"/>
    <property type="project" value="InterPro"/>
</dbReference>
<dbReference type="GO" id="GO:0007339">
    <property type="term" value="P:binding of sperm to zona pellucida"/>
    <property type="evidence" value="ECO:0007669"/>
    <property type="project" value="Ensembl"/>
</dbReference>
<dbReference type="GO" id="GO:0036503">
    <property type="term" value="P:ERAD pathway"/>
    <property type="evidence" value="ECO:0000318"/>
    <property type="project" value="GO_Central"/>
</dbReference>
<dbReference type="GO" id="GO:0006457">
    <property type="term" value="P:protein folding"/>
    <property type="evidence" value="ECO:0000318"/>
    <property type="project" value="GO_Central"/>
</dbReference>
<dbReference type="GO" id="GO:0065003">
    <property type="term" value="P:protein-containing complex assembly"/>
    <property type="evidence" value="ECO:0007669"/>
    <property type="project" value="Ensembl"/>
</dbReference>
<dbReference type="FunFam" id="2.10.250.10:FF:000001">
    <property type="entry name" value="Calnexin homolog"/>
    <property type="match status" value="1"/>
</dbReference>
<dbReference type="FunFam" id="2.60.120.200:FF:000430">
    <property type="entry name" value="Si:ch211-274f20.2"/>
    <property type="match status" value="1"/>
</dbReference>
<dbReference type="Gene3D" id="2.60.120.200">
    <property type="match status" value="1"/>
</dbReference>
<dbReference type="Gene3D" id="2.10.250.10">
    <property type="entry name" value="Calreticulin/calnexin, P domain"/>
    <property type="match status" value="1"/>
</dbReference>
<dbReference type="InterPro" id="IPR001580">
    <property type="entry name" value="Calret/calnex"/>
</dbReference>
<dbReference type="InterPro" id="IPR018124">
    <property type="entry name" value="Calret/calnex_CS"/>
</dbReference>
<dbReference type="InterPro" id="IPR009033">
    <property type="entry name" value="Calreticulin/calnexin_P_dom_sf"/>
</dbReference>
<dbReference type="InterPro" id="IPR013320">
    <property type="entry name" value="ConA-like_dom_sf"/>
</dbReference>
<dbReference type="PANTHER" id="PTHR11073:SF7">
    <property type="entry name" value="CALMEGIN"/>
    <property type="match status" value="1"/>
</dbReference>
<dbReference type="PANTHER" id="PTHR11073">
    <property type="entry name" value="CALRETICULIN AND CALNEXIN"/>
    <property type="match status" value="1"/>
</dbReference>
<dbReference type="Pfam" id="PF00262">
    <property type="entry name" value="Calreticulin"/>
    <property type="match status" value="1"/>
</dbReference>
<dbReference type="PRINTS" id="PR00626">
    <property type="entry name" value="CALRETICULIN"/>
</dbReference>
<dbReference type="SUPFAM" id="SSF49899">
    <property type="entry name" value="Concanavalin A-like lectins/glucanases"/>
    <property type="match status" value="2"/>
</dbReference>
<dbReference type="SUPFAM" id="SSF63887">
    <property type="entry name" value="P-domain of calnexin/calreticulin"/>
    <property type="match status" value="1"/>
</dbReference>
<dbReference type="PROSITE" id="PS00803">
    <property type="entry name" value="CALRETICULIN_1"/>
    <property type="match status" value="1"/>
</dbReference>
<dbReference type="PROSITE" id="PS00804">
    <property type="entry name" value="CALRETICULIN_2"/>
    <property type="match status" value="1"/>
</dbReference>
<dbReference type="PROSITE" id="PS00805">
    <property type="entry name" value="CALRETICULIN_REPEAT"/>
    <property type="match status" value="2"/>
</dbReference>
<feature type="signal peptide" evidence="5">
    <location>
        <begin position="1"/>
        <end position="19"/>
    </location>
</feature>
<feature type="chain" id="PRO_0000236245" description="Calmegin">
    <location>
        <begin position="20"/>
        <end position="606"/>
    </location>
</feature>
<feature type="topological domain" description="Lumenal" evidence="5">
    <location>
        <begin position="20"/>
        <end position="466"/>
    </location>
</feature>
<feature type="transmembrane region" description="Helical" evidence="5">
    <location>
        <begin position="467"/>
        <end position="487"/>
    </location>
</feature>
<feature type="topological domain" description="Cytoplasmic" evidence="5">
    <location>
        <begin position="488"/>
        <end position="606"/>
    </location>
</feature>
<feature type="repeat" description="1-1">
    <location>
        <begin position="263"/>
        <end position="276"/>
    </location>
</feature>
<feature type="repeat" description="1-2">
    <location>
        <begin position="280"/>
        <end position="293"/>
    </location>
</feature>
<feature type="repeat" description="1-3">
    <location>
        <begin position="299"/>
        <end position="312"/>
    </location>
</feature>
<feature type="repeat" description="1-4">
    <location>
        <begin position="318"/>
        <end position="331"/>
    </location>
</feature>
<feature type="repeat" description="2-1">
    <location>
        <begin position="335"/>
        <end position="348"/>
    </location>
</feature>
<feature type="repeat" description="2-2">
    <location>
        <begin position="352"/>
        <end position="365"/>
    </location>
</feature>
<feature type="repeat" description="2-3">
    <location>
        <begin position="366"/>
        <end position="379"/>
    </location>
</feature>
<feature type="repeat" description="2-4">
    <location>
        <begin position="380"/>
        <end position="393"/>
    </location>
</feature>
<feature type="region of interest" description="Disordered" evidence="6">
    <location>
        <begin position="255"/>
        <end position="308"/>
    </location>
</feature>
<feature type="region of interest" description="Interaction with PPIB" evidence="1">
    <location>
        <begin position="313"/>
        <end position="346"/>
    </location>
</feature>
<feature type="region of interest" description="Disordered" evidence="6">
    <location>
        <begin position="518"/>
        <end position="606"/>
    </location>
</feature>
<feature type="compositionally biased region" description="Acidic residues" evidence="6">
    <location>
        <begin position="265"/>
        <end position="275"/>
    </location>
</feature>
<feature type="compositionally biased region" description="Basic and acidic residues" evidence="6">
    <location>
        <begin position="518"/>
        <end position="544"/>
    </location>
</feature>
<feature type="compositionally biased region" description="Acidic residues" evidence="6">
    <location>
        <begin position="545"/>
        <end position="567"/>
    </location>
</feature>
<feature type="compositionally biased region" description="Basic and acidic residues" evidence="6">
    <location>
        <begin position="568"/>
        <end position="579"/>
    </location>
</feature>
<feature type="compositionally biased region" description="Basic residues" evidence="6">
    <location>
        <begin position="597"/>
        <end position="606"/>
    </location>
</feature>
<feature type="modified residue" description="N6-acetyllysine" evidence="3">
    <location>
        <position position="124"/>
    </location>
</feature>
<feature type="modified residue" description="Phosphoserine" evidence="2">
    <location>
        <position position="556"/>
    </location>
</feature>
<feature type="modified residue" description="Phosphoserine" evidence="2">
    <location>
        <position position="572"/>
    </location>
</feature>
<feature type="modified residue" description="Phosphoserine" evidence="4">
    <location>
        <position position="575"/>
    </location>
</feature>
<feature type="modified residue" description="Phosphoserine" evidence="4">
    <location>
        <position position="577"/>
    </location>
</feature>
<feature type="modified residue" description="Phosphoserine" evidence="4">
    <location>
        <position position="587"/>
    </location>
</feature>
<feature type="modified residue" description="Phosphoserine" evidence="4">
    <location>
        <position position="590"/>
    </location>
</feature>
<feature type="modified residue" description="Phosphoserine" evidence="3">
    <location>
        <position position="597"/>
    </location>
</feature>
<feature type="disulfide bond" evidence="1">
    <location>
        <begin position="147"/>
        <end position="181"/>
    </location>
</feature>
<feature type="disulfide bond" evidence="1">
    <location>
        <begin position="347"/>
        <end position="351"/>
    </location>
</feature>
<keyword id="KW-0007">Acetylation</keyword>
<keyword id="KW-0106">Calcium</keyword>
<keyword id="KW-0143">Chaperone</keyword>
<keyword id="KW-1015">Disulfide bond</keyword>
<keyword id="KW-0256">Endoplasmic reticulum</keyword>
<keyword id="KW-0472">Membrane</keyword>
<keyword id="KW-0597">Phosphoprotein</keyword>
<keyword id="KW-1185">Reference proteome</keyword>
<keyword id="KW-0677">Repeat</keyword>
<keyword id="KW-0732">Signal</keyword>
<keyword id="KW-0812">Transmembrane</keyword>
<keyword id="KW-1133">Transmembrane helix</keyword>
<name>CLGN_BOVIN</name>